<gene>
    <name type="primary">OVOS1</name>
</gene>
<sequence>MHVHVCVCLCVCIYTSSCVCACVHMCMRDALLAEGRGGGLAAADDFLYLECCKCFSQESQIAMVCQERSQNETYEVKMNNDTEACRATLNLEERRSVAIRSRENVVFVQTDKPTYKPGQKDVNGIAQFFLDTYTFTYPNITLKDPQNNRIFQRQNVTSFRNITQLSFQLISEPMFGDYWIVVKRNSRETVTHQFAVKRYVLPKFEVTVNAPQTVTISDDEFQVDVCAYNFGQPVQGETQIRVCREYFSSSNCEKNENEICEQFIAQVQTNLDIFTLLCSSFLTVMQISEKTSVFITQLLGTVNFENMDTFYRRGISYFGQLKFSDPNNVPMVNKLLQLELNDEFIGNYTTDENGEAQFSIDTSDIFDPEFNLKVRHQRTEECYLPSWLTPQYLDAHFLVSRFYSRTNSFLKIVPEPKQLECNQQKVVTVHYSLNSEAYEDDSNVKFFYLNGNFSFPISISADLAPAAVLFVYTLHPSGEIVADSVRFQVDKCFKHKVNIKFSNEQGLPGSNASLCLQAAPVLFCALRAVDRNVLLLKSEQQLSAESVSSLYNMVPSIEPYGYFYHGLNLDDGKEDPCIPQRDMFYNGLYYTPVSNYGDGDIYNIVRVRSLRILENIIQTVRTNFPETWMWDLVSVSSSGSANLSFLIPDTITQWEASGFCVNGDVGFGISSTTTLEVSQPFFIEIASPFSVVQNEQFDLIVNVFSYRNTCVEVSYIWECLPGKVNITVVAESKQSSACPNEGMEQQKLNWKDTVVQSFLVEFLFLGDILGLALQNLVVLQMPYGSGEQNAALLASDTYVLDYLKSTEQLTEEVQSKAFFLSILGYQRQLSFKNSDGSYSVFWQQSQKGSIWLSALTFKTLERMKKYVFIDENVQKQTLIWLSSQQKTSGCFKNDGQLFNHALRNALFCLEAALDSGVTNGYNHAILAYAFALAGKEKQVESLLQTLDQSAPKLSKRYYWERERKPKTEEFPSFIPWAPSAQTEKSCYVLLAVISRKIPDLTYASKIVQWLAQRMNSHGGFSSNQVINVGLILIAARGEEGLFSKDQNTVTFSSEGSSEIFQVNGHNRLLVQRSEVTQAPGEYTVDVEGHGCTFIQIFRYTGIRNKSSMVVIDVKMLSGFTPTMSSIEEVNNRSLIFQHKDSYIEYKRADSFPFSVEQSNLVFNIQPAPAMVYDYYEKGRQATAMP</sequence>
<accession>Q6IE37</accession>
<feature type="signal peptide" evidence="2">
    <location>
        <begin position="1"/>
        <end position="21"/>
    </location>
</feature>
<feature type="chain" id="PRO_0000318965" description="Ovostatin homolog 1">
    <location>
        <begin position="22"/>
        <end position="1185"/>
    </location>
</feature>
<feature type="glycosylation site" description="N-linked (GlcNAc...) asparagine" evidence="2">
    <location>
        <position position="80"/>
    </location>
</feature>
<feature type="glycosylation site" description="N-linked (GlcNAc...) asparagine" evidence="2">
    <location>
        <position position="155"/>
    </location>
</feature>
<feature type="glycosylation site" description="N-linked (GlcNAc...) asparagine" evidence="2">
    <location>
        <position position="347"/>
    </location>
</feature>
<feature type="glycosylation site" description="N-linked (GlcNAc...) asparagine" evidence="2">
    <location>
        <position position="452"/>
    </location>
</feature>
<feature type="glycosylation site" description="N-linked (GlcNAc...) asparagine" evidence="2">
    <location>
        <position position="725"/>
    </location>
</feature>
<reference key="1">
    <citation type="journal article" date="2006" name="Nature">
        <title>The finished DNA sequence of human chromosome 12.</title>
        <authorList>
            <person name="Scherer S.E."/>
            <person name="Muzny D.M."/>
            <person name="Buhay C.J."/>
            <person name="Chen R."/>
            <person name="Cree A."/>
            <person name="Ding Y."/>
            <person name="Dugan-Rocha S."/>
            <person name="Gill R."/>
            <person name="Gunaratne P."/>
            <person name="Harris R.A."/>
            <person name="Hawes A.C."/>
            <person name="Hernandez J."/>
            <person name="Hodgson A.V."/>
            <person name="Hume J."/>
            <person name="Jackson A."/>
            <person name="Khan Z.M."/>
            <person name="Kovar-Smith C."/>
            <person name="Lewis L.R."/>
            <person name="Lozado R.J."/>
            <person name="Metzker M.L."/>
            <person name="Milosavljevic A."/>
            <person name="Miner G.R."/>
            <person name="Montgomery K.T."/>
            <person name="Morgan M.B."/>
            <person name="Nazareth L.V."/>
            <person name="Scott G."/>
            <person name="Sodergren E."/>
            <person name="Song X.-Z."/>
            <person name="Steffen D."/>
            <person name="Lovering R.C."/>
            <person name="Wheeler D.A."/>
            <person name="Worley K.C."/>
            <person name="Yuan Y."/>
            <person name="Zhang Z."/>
            <person name="Adams C.Q."/>
            <person name="Ansari-Lari M.A."/>
            <person name="Ayele M."/>
            <person name="Brown M.J."/>
            <person name="Chen G."/>
            <person name="Chen Z."/>
            <person name="Clerc-Blankenburg K.P."/>
            <person name="Davis C."/>
            <person name="Delgado O."/>
            <person name="Dinh H.H."/>
            <person name="Draper H."/>
            <person name="Gonzalez-Garay M.L."/>
            <person name="Havlak P."/>
            <person name="Jackson L.R."/>
            <person name="Jacob L.S."/>
            <person name="Kelly S.H."/>
            <person name="Li L."/>
            <person name="Li Z."/>
            <person name="Liu J."/>
            <person name="Liu W."/>
            <person name="Lu J."/>
            <person name="Maheshwari M."/>
            <person name="Nguyen B.-V."/>
            <person name="Okwuonu G.O."/>
            <person name="Pasternak S."/>
            <person name="Perez L.M."/>
            <person name="Plopper F.J.H."/>
            <person name="Santibanez J."/>
            <person name="Shen H."/>
            <person name="Tabor P.E."/>
            <person name="Verduzco D."/>
            <person name="Waldron L."/>
            <person name="Wang Q."/>
            <person name="Williams G.A."/>
            <person name="Zhang J."/>
            <person name="Zhou J."/>
            <person name="Allen C.C."/>
            <person name="Amin A.G."/>
            <person name="Anyalebechi V."/>
            <person name="Bailey M."/>
            <person name="Barbaria J.A."/>
            <person name="Bimage K.E."/>
            <person name="Bryant N.P."/>
            <person name="Burch P.E."/>
            <person name="Burkett C.E."/>
            <person name="Burrell K.L."/>
            <person name="Calderon E."/>
            <person name="Cardenas V."/>
            <person name="Carter K."/>
            <person name="Casias K."/>
            <person name="Cavazos I."/>
            <person name="Cavazos S.R."/>
            <person name="Ceasar H."/>
            <person name="Chacko J."/>
            <person name="Chan S.N."/>
            <person name="Chavez D."/>
            <person name="Christopoulos C."/>
            <person name="Chu J."/>
            <person name="Cockrell R."/>
            <person name="Cox C.D."/>
            <person name="Dang M."/>
            <person name="Dathorne S.R."/>
            <person name="David R."/>
            <person name="Davis C.M."/>
            <person name="Davy-Carroll L."/>
            <person name="Deshazo D.R."/>
            <person name="Donlin J.E."/>
            <person name="D'Souza L."/>
            <person name="Eaves K.A."/>
            <person name="Egan A."/>
            <person name="Emery-Cohen A.J."/>
            <person name="Escotto M."/>
            <person name="Flagg N."/>
            <person name="Forbes L.D."/>
            <person name="Gabisi A.M."/>
            <person name="Garza M."/>
            <person name="Hamilton C."/>
            <person name="Henderson N."/>
            <person name="Hernandez O."/>
            <person name="Hines S."/>
            <person name="Hogues M.E."/>
            <person name="Huang M."/>
            <person name="Idlebird D.G."/>
            <person name="Johnson R."/>
            <person name="Jolivet A."/>
            <person name="Jones S."/>
            <person name="Kagan R."/>
            <person name="King L.M."/>
            <person name="Leal B."/>
            <person name="Lebow H."/>
            <person name="Lee S."/>
            <person name="LeVan J.M."/>
            <person name="Lewis L.C."/>
            <person name="London P."/>
            <person name="Lorensuhewa L.M."/>
            <person name="Loulseged H."/>
            <person name="Lovett D.A."/>
            <person name="Lucier A."/>
            <person name="Lucier R.L."/>
            <person name="Ma J."/>
            <person name="Madu R.C."/>
            <person name="Mapua P."/>
            <person name="Martindale A.D."/>
            <person name="Martinez E."/>
            <person name="Massey E."/>
            <person name="Mawhiney S."/>
            <person name="Meador M.G."/>
            <person name="Mendez S."/>
            <person name="Mercado C."/>
            <person name="Mercado I.C."/>
            <person name="Merritt C.E."/>
            <person name="Miner Z.L."/>
            <person name="Minja E."/>
            <person name="Mitchell T."/>
            <person name="Mohabbat F."/>
            <person name="Mohabbat K."/>
            <person name="Montgomery B."/>
            <person name="Moore N."/>
            <person name="Morris S."/>
            <person name="Munidasa M."/>
            <person name="Ngo R.N."/>
            <person name="Nguyen N.B."/>
            <person name="Nickerson E."/>
            <person name="Nwaokelemeh O.O."/>
            <person name="Nwokenkwo S."/>
            <person name="Obregon M."/>
            <person name="Oguh M."/>
            <person name="Oragunye N."/>
            <person name="Oviedo R.J."/>
            <person name="Parish B.J."/>
            <person name="Parker D.N."/>
            <person name="Parrish J."/>
            <person name="Parks K.L."/>
            <person name="Paul H.A."/>
            <person name="Payton B.A."/>
            <person name="Perez A."/>
            <person name="Perrin W."/>
            <person name="Pickens A."/>
            <person name="Primus E.L."/>
            <person name="Pu L.-L."/>
            <person name="Puazo M."/>
            <person name="Quiles M.M."/>
            <person name="Quiroz J.B."/>
            <person name="Rabata D."/>
            <person name="Reeves K."/>
            <person name="Ruiz S.J."/>
            <person name="Shao H."/>
            <person name="Sisson I."/>
            <person name="Sonaike T."/>
            <person name="Sorelle R.P."/>
            <person name="Sutton A.E."/>
            <person name="Svatek A.F."/>
            <person name="Svetz L.A."/>
            <person name="Tamerisa K.S."/>
            <person name="Taylor T.R."/>
            <person name="Teague B."/>
            <person name="Thomas N."/>
            <person name="Thorn R.D."/>
            <person name="Trejos Z.Y."/>
            <person name="Trevino B.K."/>
            <person name="Ukegbu O.N."/>
            <person name="Urban J.B."/>
            <person name="Vasquez L.I."/>
            <person name="Vera V.A."/>
            <person name="Villasana D.M."/>
            <person name="Wang L."/>
            <person name="Ward-Moore S."/>
            <person name="Warren J.T."/>
            <person name="Wei X."/>
            <person name="White F."/>
            <person name="Williamson A.L."/>
            <person name="Wleczyk R."/>
            <person name="Wooden H.S."/>
            <person name="Wooden S.H."/>
            <person name="Yen J."/>
            <person name="Yoon L."/>
            <person name="Yoon V."/>
            <person name="Zorrilla S.E."/>
            <person name="Nelson D."/>
            <person name="Kucherlapati R."/>
            <person name="Weinstock G."/>
            <person name="Gibbs R.A."/>
        </authorList>
    </citation>
    <scope>NUCLEOTIDE SEQUENCE [LARGE SCALE GENOMIC DNA]</scope>
</reference>
<reference key="2">
    <citation type="journal article" date="2004" name="Genome Res.">
        <title>A genomic analysis of rat proteases and protease inhibitors.</title>
        <authorList>
            <person name="Puente X.S."/>
            <person name="Lopez-Otin C."/>
        </authorList>
    </citation>
    <scope>IDENTIFICATION</scope>
</reference>
<proteinExistence type="evidence at transcript level"/>
<evidence type="ECO:0000250" key="1"/>
<evidence type="ECO:0000255" key="2"/>
<evidence type="ECO:0000305" key="3"/>
<organism>
    <name type="scientific">Homo sapiens</name>
    <name type="common">Human</name>
    <dbReference type="NCBI Taxonomy" id="9606"/>
    <lineage>
        <taxon>Eukaryota</taxon>
        <taxon>Metazoa</taxon>
        <taxon>Chordata</taxon>
        <taxon>Craniata</taxon>
        <taxon>Vertebrata</taxon>
        <taxon>Euteleostomi</taxon>
        <taxon>Mammalia</taxon>
        <taxon>Eutheria</taxon>
        <taxon>Euarchontoglires</taxon>
        <taxon>Primates</taxon>
        <taxon>Haplorrhini</taxon>
        <taxon>Catarrhini</taxon>
        <taxon>Hominidae</taxon>
        <taxon>Homo</taxon>
    </lineage>
</organism>
<keyword id="KW-0082">Bait region</keyword>
<keyword id="KW-0325">Glycoprotein</keyword>
<keyword id="KW-0646">Protease inhibitor</keyword>
<keyword id="KW-1185">Reference proteome</keyword>
<keyword id="KW-0964">Secreted</keyword>
<keyword id="KW-0722">Serine protease inhibitor</keyword>
<keyword id="KW-0732">Signal</keyword>
<protein>
    <recommendedName>
        <fullName>Ovostatin homolog 1</fullName>
    </recommendedName>
</protein>
<name>OVOS1_HUMAN</name>
<comment type="function">
    <text evidence="1">Is able to inhibit all four classes of proteinases by a unique 'trapping' mechanism.</text>
</comment>
<comment type="subunit">
    <text evidence="1">Homotetramer.</text>
</comment>
<comment type="subcellular location">
    <subcellularLocation>
        <location evidence="1">Secreted</location>
    </subcellularLocation>
</comment>
<comment type="similarity">
    <text evidence="3">Belongs to the protease inhibitor I39 (alpha-2-macroglobulin) family.</text>
</comment>
<dbReference type="EMBL" id="AC006432">
    <property type="status" value="NOT_ANNOTATED_CDS"/>
    <property type="molecule type" value="Genomic_DNA"/>
</dbReference>
<dbReference type="EMBL" id="AC092821">
    <property type="status" value="NOT_ANNOTATED_CDS"/>
    <property type="molecule type" value="Genomic_DNA"/>
</dbReference>
<dbReference type="EMBL" id="BN000356">
    <property type="protein sequence ID" value="CAE51408.1"/>
    <property type="molecule type" value="mRNA"/>
</dbReference>
<dbReference type="SMR" id="Q6IE37"/>
<dbReference type="GlyCosmos" id="Q6IE37">
    <property type="glycosylation" value="5 sites, No reported glycans"/>
</dbReference>
<dbReference type="GlyGen" id="Q6IE37">
    <property type="glycosylation" value="6 sites, 1 O-linked glycan (1 site)"/>
</dbReference>
<dbReference type="iPTMnet" id="Q6IE37"/>
<dbReference type="PhosphoSitePlus" id="Q6IE37"/>
<dbReference type="SwissPalm" id="Q6IE37"/>
<dbReference type="BioMuta" id="OVOS1"/>
<dbReference type="DMDM" id="182637456"/>
<dbReference type="jPOST" id="Q6IE37"/>
<dbReference type="MassIVE" id="Q6IE37"/>
<dbReference type="PeptideAtlas" id="Q6IE37"/>
<dbReference type="ProteomicsDB" id="66403"/>
<dbReference type="neXtProt" id="NX_Q6IE37"/>
<dbReference type="InParanoid" id="Q6IE37"/>
<dbReference type="PAN-GO" id="Q6IE37">
    <property type="GO annotations" value="0 GO annotations based on evolutionary models"/>
</dbReference>
<dbReference type="PhylomeDB" id="Q6IE37"/>
<dbReference type="Pharos" id="Q6IE37">
    <property type="development level" value="Tdark"/>
</dbReference>
<dbReference type="PRO" id="PR:Q6IE37"/>
<dbReference type="Proteomes" id="UP000005640">
    <property type="component" value="Unplaced"/>
</dbReference>
<dbReference type="RNAct" id="Q6IE37">
    <property type="molecule type" value="protein"/>
</dbReference>
<dbReference type="GO" id="GO:0005615">
    <property type="term" value="C:extracellular space"/>
    <property type="evidence" value="ECO:0007669"/>
    <property type="project" value="InterPro"/>
</dbReference>
<dbReference type="GO" id="GO:0004867">
    <property type="term" value="F:serine-type endopeptidase inhibitor activity"/>
    <property type="evidence" value="ECO:0007669"/>
    <property type="project" value="UniProtKB-KW"/>
</dbReference>
<dbReference type="FunFam" id="2.60.40.1930:FF:000001">
    <property type="entry name" value="CD109 isoform 3"/>
    <property type="match status" value="1"/>
</dbReference>
<dbReference type="Gene3D" id="1.50.10.20">
    <property type="match status" value="2"/>
</dbReference>
<dbReference type="Gene3D" id="2.20.130.20">
    <property type="match status" value="1"/>
</dbReference>
<dbReference type="Gene3D" id="2.60.120.1540">
    <property type="match status" value="2"/>
</dbReference>
<dbReference type="Gene3D" id="2.60.40.1930">
    <property type="match status" value="2"/>
</dbReference>
<dbReference type="Gene3D" id="2.60.40.1940">
    <property type="match status" value="1"/>
</dbReference>
<dbReference type="Gene3D" id="2.60.40.690">
    <property type="entry name" value="Alpha-macroglobulin, receptor-binding domain"/>
    <property type="match status" value="1"/>
</dbReference>
<dbReference type="Gene3D" id="2.60.40.10">
    <property type="entry name" value="Immunoglobulins"/>
    <property type="match status" value="2"/>
</dbReference>
<dbReference type="InterPro" id="IPR009048">
    <property type="entry name" value="A-macroglobulin_rcpt-bd"/>
</dbReference>
<dbReference type="InterPro" id="IPR036595">
    <property type="entry name" value="A-macroglobulin_rcpt-bd_sf"/>
</dbReference>
<dbReference type="InterPro" id="IPR050473">
    <property type="entry name" value="A2M/Complement_sys"/>
</dbReference>
<dbReference type="InterPro" id="IPR011625">
    <property type="entry name" value="A2M_N_BRD"/>
</dbReference>
<dbReference type="InterPro" id="IPR047565">
    <property type="entry name" value="Alpha-macroglob_thiol-ester_cl"/>
</dbReference>
<dbReference type="InterPro" id="IPR011626">
    <property type="entry name" value="Alpha-macroglobulin_TED"/>
</dbReference>
<dbReference type="InterPro" id="IPR013783">
    <property type="entry name" value="Ig-like_fold"/>
</dbReference>
<dbReference type="InterPro" id="IPR014756">
    <property type="entry name" value="Ig_E-set"/>
</dbReference>
<dbReference type="InterPro" id="IPR001599">
    <property type="entry name" value="Macroglobln_a2"/>
</dbReference>
<dbReference type="InterPro" id="IPR041555">
    <property type="entry name" value="MG3"/>
</dbReference>
<dbReference type="InterPro" id="IPR040839">
    <property type="entry name" value="MG4"/>
</dbReference>
<dbReference type="InterPro" id="IPR008930">
    <property type="entry name" value="Terpenoid_cyclase/PrenylTrfase"/>
</dbReference>
<dbReference type="PANTHER" id="PTHR11412">
    <property type="entry name" value="MACROGLOBULIN / COMPLEMENT"/>
    <property type="match status" value="1"/>
</dbReference>
<dbReference type="PANTHER" id="PTHR11412:SF174">
    <property type="entry name" value="OVOSTATIN HOMOLOG 1"/>
    <property type="match status" value="1"/>
</dbReference>
<dbReference type="Pfam" id="PF00207">
    <property type="entry name" value="A2M"/>
    <property type="match status" value="1"/>
</dbReference>
<dbReference type="Pfam" id="PF07703">
    <property type="entry name" value="A2M_BRD"/>
    <property type="match status" value="1"/>
</dbReference>
<dbReference type="Pfam" id="PF07677">
    <property type="entry name" value="A2M_recep"/>
    <property type="match status" value="1"/>
</dbReference>
<dbReference type="Pfam" id="PF17791">
    <property type="entry name" value="MG3"/>
    <property type="match status" value="1"/>
</dbReference>
<dbReference type="Pfam" id="PF17789">
    <property type="entry name" value="MG4"/>
    <property type="match status" value="1"/>
</dbReference>
<dbReference type="Pfam" id="PF07678">
    <property type="entry name" value="TED_complement"/>
    <property type="match status" value="1"/>
</dbReference>
<dbReference type="SMART" id="SM01360">
    <property type="entry name" value="A2M"/>
    <property type="match status" value="1"/>
</dbReference>
<dbReference type="SMART" id="SM01359">
    <property type="entry name" value="A2M_N_2"/>
    <property type="match status" value="1"/>
</dbReference>
<dbReference type="SMART" id="SM01361">
    <property type="entry name" value="A2M_recep"/>
    <property type="match status" value="1"/>
</dbReference>
<dbReference type="SMART" id="SM01419">
    <property type="entry name" value="Thiol-ester_cl"/>
    <property type="match status" value="1"/>
</dbReference>
<dbReference type="SUPFAM" id="SSF49410">
    <property type="entry name" value="Alpha-macroglobulin receptor domain"/>
    <property type="match status" value="1"/>
</dbReference>
<dbReference type="SUPFAM" id="SSF81296">
    <property type="entry name" value="E set domains"/>
    <property type="match status" value="1"/>
</dbReference>
<dbReference type="SUPFAM" id="SSF48239">
    <property type="entry name" value="Terpenoid cyclases/Protein prenyltransferases"/>
    <property type="match status" value="1"/>
</dbReference>